<keyword id="KW-0997">Cell inner membrane</keyword>
<keyword id="KW-1003">Cell membrane</keyword>
<keyword id="KW-0285">Flavoprotein</keyword>
<keyword id="KW-0288">FMN</keyword>
<keyword id="KW-0472">Membrane</keyword>
<keyword id="KW-0560">Oxidoreductase</keyword>
<evidence type="ECO:0000255" key="1">
    <source>
        <dbReference type="HAMAP-Rule" id="MF_01559"/>
    </source>
</evidence>
<comment type="function">
    <text evidence="1">Catalyzes the conversion of L-lactate to pyruvate. Is coupled to the respiratory chain.</text>
</comment>
<comment type="catalytic activity">
    <reaction evidence="1">
        <text>(S)-lactate + A = pyruvate + AH2</text>
        <dbReference type="Rhea" id="RHEA:45816"/>
        <dbReference type="ChEBI" id="CHEBI:13193"/>
        <dbReference type="ChEBI" id="CHEBI:15361"/>
        <dbReference type="ChEBI" id="CHEBI:16651"/>
        <dbReference type="ChEBI" id="CHEBI:17499"/>
    </reaction>
</comment>
<comment type="cofactor">
    <cofactor evidence="1">
        <name>FMN</name>
        <dbReference type="ChEBI" id="CHEBI:58210"/>
    </cofactor>
</comment>
<comment type="subcellular location">
    <subcellularLocation>
        <location evidence="1">Cell inner membrane</location>
        <topology evidence="1">Peripheral membrane protein</topology>
    </subcellularLocation>
</comment>
<comment type="similarity">
    <text evidence="1">Belongs to the FMN-dependent alpha-hydroxy acid dehydrogenase family.</text>
</comment>
<name>LLDD_ECOBW</name>
<feature type="chain" id="PRO_0000383420" description="L-lactate dehydrogenase">
    <location>
        <begin position="1"/>
        <end position="396"/>
    </location>
</feature>
<feature type="domain" description="FMN hydroxy acid dehydrogenase" evidence="1">
    <location>
        <begin position="1"/>
        <end position="380"/>
    </location>
</feature>
<feature type="active site" description="Proton acceptor" evidence="1">
    <location>
        <position position="275"/>
    </location>
</feature>
<feature type="binding site" evidence="1">
    <location>
        <position position="24"/>
    </location>
    <ligand>
        <name>substrate</name>
    </ligand>
</feature>
<feature type="binding site" evidence="1">
    <location>
        <position position="106"/>
    </location>
    <ligand>
        <name>FMN</name>
        <dbReference type="ChEBI" id="CHEBI:58210"/>
    </ligand>
</feature>
<feature type="binding site" evidence="1">
    <location>
        <position position="127"/>
    </location>
    <ligand>
        <name>FMN</name>
        <dbReference type="ChEBI" id="CHEBI:58210"/>
    </ligand>
</feature>
<feature type="binding site" evidence="1">
    <location>
        <position position="129"/>
    </location>
    <ligand>
        <name>substrate</name>
    </ligand>
</feature>
<feature type="binding site" evidence="1">
    <location>
        <position position="155"/>
    </location>
    <ligand>
        <name>FMN</name>
        <dbReference type="ChEBI" id="CHEBI:58210"/>
    </ligand>
</feature>
<feature type="binding site" evidence="1">
    <location>
        <position position="164"/>
    </location>
    <ligand>
        <name>substrate</name>
    </ligand>
</feature>
<feature type="binding site" evidence="1">
    <location>
        <position position="251"/>
    </location>
    <ligand>
        <name>FMN</name>
        <dbReference type="ChEBI" id="CHEBI:58210"/>
    </ligand>
</feature>
<feature type="binding site" evidence="1">
    <location>
        <position position="278"/>
    </location>
    <ligand>
        <name>substrate</name>
    </ligand>
</feature>
<feature type="binding site" evidence="1">
    <location>
        <begin position="306"/>
        <end position="330"/>
    </location>
    <ligand>
        <name>FMN</name>
        <dbReference type="ChEBI" id="CHEBI:58210"/>
    </ligand>
</feature>
<proteinExistence type="inferred from homology"/>
<protein>
    <recommendedName>
        <fullName evidence="1">L-lactate dehydrogenase</fullName>
        <ecNumber evidence="1">1.1.-.-</ecNumber>
    </recommendedName>
</protein>
<reference key="1">
    <citation type="journal article" date="2009" name="J. Bacteriol.">
        <title>Genomic sequencing reveals regulatory mutations and recombinational events in the widely used MC4100 lineage of Escherichia coli K-12.</title>
        <authorList>
            <person name="Ferenci T."/>
            <person name="Zhou Z."/>
            <person name="Betteridge T."/>
            <person name="Ren Y."/>
            <person name="Liu Y."/>
            <person name="Feng L."/>
            <person name="Reeves P.R."/>
            <person name="Wang L."/>
        </authorList>
    </citation>
    <scope>NUCLEOTIDE SEQUENCE [LARGE SCALE GENOMIC DNA]</scope>
    <source>
        <strain>K12 / MC4100 / BW2952</strain>
    </source>
</reference>
<gene>
    <name evidence="1" type="primary">lldD</name>
    <name type="ordered locus">BWG_3296</name>
</gene>
<organism>
    <name type="scientific">Escherichia coli (strain K12 / MC4100 / BW2952)</name>
    <dbReference type="NCBI Taxonomy" id="595496"/>
    <lineage>
        <taxon>Bacteria</taxon>
        <taxon>Pseudomonadati</taxon>
        <taxon>Pseudomonadota</taxon>
        <taxon>Gammaproteobacteria</taxon>
        <taxon>Enterobacterales</taxon>
        <taxon>Enterobacteriaceae</taxon>
        <taxon>Escherichia</taxon>
    </lineage>
</organism>
<sequence length="396" mass="42728">MIISAASDYRAAAQRILPPFLFHYMDGGAYSEYTLRRNVEDLSEVALRQRILKNMSDLSLETTLFNEKLSMPVALAPVGLCGMYARRGEVQAAKAADAHGIPFTLSTVSVCPIEEVAPAIKRPMWFQLYVLRDRGFMRNALERAKAAGCSTLVFTVDMPTPGARYRDAHSGMSGPNAAMRRYLQAVTHPQWAWDVGLNGRPHDLGNISAYLGKPTGLEDYIGWLGNNFDPSISWKDLEWIRDFWDGPMVIKGILDPEDARDAVRFGADGIVVSNHGGRQLDGVLSSARALPAIADAVKGDIAILADSGIRNGLDVVRMIALGADTVLLGRAFLYALATAGQAGVANLLNLIEKEMKVAMTLTGAKSISEITQDSLVQGLGKELPAALAPMAKGNAA</sequence>
<dbReference type="EC" id="1.1.-.-" evidence="1"/>
<dbReference type="EMBL" id="CP001396">
    <property type="protein sequence ID" value="ACR63670.1"/>
    <property type="molecule type" value="Genomic_DNA"/>
</dbReference>
<dbReference type="RefSeq" id="WP_000586962.1">
    <property type="nucleotide sequence ID" value="NC_012759.1"/>
</dbReference>
<dbReference type="SMR" id="C4ZXJ7"/>
<dbReference type="KEGG" id="ebw:BWG_3296"/>
<dbReference type="HOGENOM" id="CLU_020639_0_0_6"/>
<dbReference type="GO" id="GO:0005886">
    <property type="term" value="C:plasma membrane"/>
    <property type="evidence" value="ECO:0007669"/>
    <property type="project" value="UniProtKB-SubCell"/>
</dbReference>
<dbReference type="GO" id="GO:0010181">
    <property type="term" value="F:FMN binding"/>
    <property type="evidence" value="ECO:0007669"/>
    <property type="project" value="InterPro"/>
</dbReference>
<dbReference type="GO" id="GO:0004459">
    <property type="term" value="F:L-lactate dehydrogenase activity"/>
    <property type="evidence" value="ECO:0007669"/>
    <property type="project" value="UniProtKB-UniRule"/>
</dbReference>
<dbReference type="GO" id="GO:0009060">
    <property type="term" value="P:aerobic respiration"/>
    <property type="evidence" value="ECO:0007669"/>
    <property type="project" value="TreeGrafter"/>
</dbReference>
<dbReference type="GO" id="GO:0006089">
    <property type="term" value="P:lactate metabolic process"/>
    <property type="evidence" value="ECO:0007669"/>
    <property type="project" value="UniProtKB-UniRule"/>
</dbReference>
<dbReference type="CDD" id="cd02809">
    <property type="entry name" value="alpha_hydroxyacid_oxid_FMN"/>
    <property type="match status" value="1"/>
</dbReference>
<dbReference type="FunFam" id="3.20.20.70:FF:000029">
    <property type="entry name" value="L-lactate dehydrogenase"/>
    <property type="match status" value="1"/>
</dbReference>
<dbReference type="Gene3D" id="3.20.20.70">
    <property type="entry name" value="Aldolase class I"/>
    <property type="match status" value="1"/>
</dbReference>
<dbReference type="HAMAP" id="MF_01559">
    <property type="entry name" value="L_lact_dehydr"/>
    <property type="match status" value="1"/>
</dbReference>
<dbReference type="InterPro" id="IPR013785">
    <property type="entry name" value="Aldolase_TIM"/>
</dbReference>
<dbReference type="InterPro" id="IPR012133">
    <property type="entry name" value="Alpha-hydoxy_acid_DH_FMN"/>
</dbReference>
<dbReference type="InterPro" id="IPR000262">
    <property type="entry name" value="FMN-dep_DH"/>
</dbReference>
<dbReference type="InterPro" id="IPR037396">
    <property type="entry name" value="FMN_HAD"/>
</dbReference>
<dbReference type="InterPro" id="IPR008259">
    <property type="entry name" value="FMN_hydac_DH_AS"/>
</dbReference>
<dbReference type="InterPro" id="IPR020920">
    <property type="entry name" value="LldD"/>
</dbReference>
<dbReference type="NCBIfam" id="NF033901">
    <property type="entry name" value="L_lactate_LldD"/>
    <property type="match status" value="1"/>
</dbReference>
<dbReference type="NCBIfam" id="NF008398">
    <property type="entry name" value="PRK11197.1"/>
    <property type="match status" value="1"/>
</dbReference>
<dbReference type="PANTHER" id="PTHR10578:SF85">
    <property type="entry name" value="L-LACTATE DEHYDROGENASE"/>
    <property type="match status" value="1"/>
</dbReference>
<dbReference type="PANTHER" id="PTHR10578">
    <property type="entry name" value="S -2-HYDROXY-ACID OXIDASE-RELATED"/>
    <property type="match status" value="1"/>
</dbReference>
<dbReference type="Pfam" id="PF01070">
    <property type="entry name" value="FMN_dh"/>
    <property type="match status" value="1"/>
</dbReference>
<dbReference type="PIRSF" id="PIRSF000138">
    <property type="entry name" value="Al-hdrx_acd_dh"/>
    <property type="match status" value="1"/>
</dbReference>
<dbReference type="SUPFAM" id="SSF51395">
    <property type="entry name" value="FMN-linked oxidoreductases"/>
    <property type="match status" value="1"/>
</dbReference>
<dbReference type="PROSITE" id="PS00557">
    <property type="entry name" value="FMN_HYDROXY_ACID_DH_1"/>
    <property type="match status" value="1"/>
</dbReference>
<dbReference type="PROSITE" id="PS51349">
    <property type="entry name" value="FMN_HYDROXY_ACID_DH_2"/>
    <property type="match status" value="1"/>
</dbReference>
<accession>C4ZXJ7</accession>